<keyword id="KW-0165">Cleavage on pair of basic residues</keyword>
<keyword id="KW-1015">Disulfide bond</keyword>
<keyword id="KW-0964">Secreted</keyword>
<keyword id="KW-0732">Signal</keyword>
<keyword id="KW-0800">Toxin</keyword>
<proteinExistence type="inferred from homology"/>
<evidence type="ECO:0000250" key="1"/>
<evidence type="ECO:0000250" key="2">
    <source>
        <dbReference type="UniProtKB" id="Q7Z094"/>
    </source>
</evidence>
<evidence type="ECO:0000303" key="3">
    <source>
    </source>
</evidence>
<evidence type="ECO:0000305" key="4"/>
<evidence type="ECO:0000305" key="5">
    <source>
    </source>
</evidence>
<dbReference type="EMBL" id="GQ184577">
    <property type="protein sequence ID" value="ACU30734.1"/>
    <property type="molecule type" value="mRNA"/>
</dbReference>
<dbReference type="SMR" id="C7DQX7"/>
<dbReference type="GO" id="GO:0005576">
    <property type="term" value="C:extracellular region"/>
    <property type="evidence" value="ECO:0007669"/>
    <property type="project" value="UniProtKB-SubCell"/>
</dbReference>
<dbReference type="GO" id="GO:0090729">
    <property type="term" value="F:toxin activity"/>
    <property type="evidence" value="ECO:0007669"/>
    <property type="project" value="UniProtKB-KW"/>
</dbReference>
<dbReference type="InterPro" id="IPR013141">
    <property type="entry name" value="Conotoxin-I_CS"/>
</dbReference>
<dbReference type="InterPro" id="IPR020242">
    <property type="entry name" value="Conotoxin_I2"/>
</dbReference>
<dbReference type="Pfam" id="PF17557">
    <property type="entry name" value="Conotoxin_I2"/>
    <property type="match status" value="1"/>
</dbReference>
<dbReference type="PROSITE" id="PS60019">
    <property type="entry name" value="I_CONOTOXIN"/>
    <property type="match status" value="1"/>
</dbReference>
<name>I2B6_CONLT</name>
<comment type="subcellular location">
    <subcellularLocation>
        <location evidence="5">Secreted</location>
    </subcellularLocation>
</comment>
<comment type="tissue specificity">
    <text evidence="5">Expressed by the venom duct.</text>
</comment>
<comment type="domain">
    <text evidence="4">The cysteine framework is XI (C-C-CC-CC-C-C).</text>
</comment>
<comment type="similarity">
    <text evidence="4">Belongs to the conotoxin I2 superfamily.</text>
</comment>
<organism>
    <name type="scientific">Conus litteratus</name>
    <name type="common">Lettered cone</name>
    <dbReference type="NCBI Taxonomy" id="89445"/>
    <lineage>
        <taxon>Eukaryota</taxon>
        <taxon>Metazoa</taxon>
        <taxon>Spiralia</taxon>
        <taxon>Lophotrochozoa</taxon>
        <taxon>Mollusca</taxon>
        <taxon>Gastropoda</taxon>
        <taxon>Caenogastropoda</taxon>
        <taxon>Neogastropoda</taxon>
        <taxon>Conoidea</taxon>
        <taxon>Conidae</taxon>
        <taxon>Conus</taxon>
        <taxon>Elisaconus</taxon>
    </lineage>
</organism>
<accession>C7DQX7</accession>
<reference key="1">
    <citation type="journal article" date="2009" name="Peptides">
        <title>Identification of novel I-superfamily conopeptides from several clades of Conus species found in the South China Sea.</title>
        <authorList>
            <person name="Liu Z."/>
            <person name="Xu N."/>
            <person name="Hu J."/>
            <person name="Zhao C."/>
            <person name="Yu Z."/>
            <person name="Dai Q."/>
        </authorList>
    </citation>
    <scope>NUCLEOTIDE SEQUENCE [MRNA]</scope>
    <source>
        <tissue>Venom duct</tissue>
    </source>
</reference>
<sequence length="70" mass="7964">MMFRLTSVGSFLLVIVFLNLVVLTNACDLEGMFCMYDFECCLSECCMGICAFGCTKRAQRQKLLRSFGQR</sequence>
<protein>
    <recommendedName>
        <fullName evidence="3">Conotoxin Lt11.6</fullName>
    </recommendedName>
</protein>
<feature type="signal peptide" evidence="1">
    <location>
        <begin position="1"/>
        <end position="26"/>
    </location>
</feature>
<feature type="peptide" id="PRO_0000392043" description="Conotoxin Lt11.6">
    <location>
        <begin position="27"/>
        <end position="55"/>
    </location>
</feature>
<feature type="propeptide" id="PRO_0000392044" evidence="1">
    <location>
        <begin position="58"/>
        <end position="70"/>
    </location>
</feature>
<feature type="disulfide bond" evidence="2">
    <location>
        <begin position="27"/>
        <end position="41"/>
    </location>
</feature>
<feature type="disulfide bond" evidence="2">
    <location>
        <begin position="34"/>
        <end position="46"/>
    </location>
</feature>
<feature type="disulfide bond" evidence="2">
    <location>
        <begin position="40"/>
        <end position="50"/>
    </location>
</feature>
<feature type="disulfide bond" evidence="2">
    <location>
        <begin position="45"/>
        <end position="54"/>
    </location>
</feature>